<gene>
    <name type="primary">ZNF286A</name>
    <name type="synonym">KIAA1874</name>
    <name type="synonym">ZNF286</name>
</gene>
<evidence type="ECO:0000255" key="1">
    <source>
        <dbReference type="PROSITE-ProRule" id="PRU00042"/>
    </source>
</evidence>
<evidence type="ECO:0000255" key="2">
    <source>
        <dbReference type="PROSITE-ProRule" id="PRU00119"/>
    </source>
</evidence>
<evidence type="ECO:0000256" key="3">
    <source>
        <dbReference type="SAM" id="MobiDB-lite"/>
    </source>
</evidence>
<evidence type="ECO:0000269" key="4">
    <source>
    </source>
</evidence>
<evidence type="ECO:0000303" key="5">
    <source>
    </source>
</evidence>
<evidence type="ECO:0000305" key="6"/>
<evidence type="ECO:0007744" key="7">
    <source>
    </source>
</evidence>
<protein>
    <recommendedName>
        <fullName>Zinc finger protein 286A</fullName>
    </recommendedName>
</protein>
<comment type="function">
    <text>May be involved in transcriptional regulation.</text>
</comment>
<comment type="interaction">
    <interactant intactId="EBI-10754950">
        <id>Q9HBT8</id>
    </interactant>
    <interactant intactId="EBI-358049">
        <id>Q13895</id>
        <label>BYSL</label>
    </interactant>
    <organismsDiffer>false</organismsDiffer>
    <experiments>3</experiments>
</comment>
<comment type="interaction">
    <interactant intactId="EBI-10754950">
        <id>Q9HBT8</id>
    </interactant>
    <interactant intactId="EBI-3866279">
        <id>Q9BWT7</id>
        <label>CARD10</label>
    </interactant>
    <organismsDiffer>false</organismsDiffer>
    <experiments>3</experiments>
</comment>
<comment type="interaction">
    <interactant intactId="EBI-10754950">
        <id>Q9HBT8</id>
    </interactant>
    <interactant intactId="EBI-10976677">
        <id>G5E9A7</id>
        <label>DMWD</label>
    </interactant>
    <organismsDiffer>false</organismsDiffer>
    <experiments>3</experiments>
</comment>
<comment type="interaction">
    <interactant intactId="EBI-10754950">
        <id>Q9HBT8</id>
    </interactant>
    <interactant intactId="EBI-3893317">
        <id>P09067</id>
        <label>HOXB5</label>
    </interactant>
    <organismsDiffer>false</organismsDiffer>
    <experiments>3</experiments>
</comment>
<comment type="interaction">
    <interactant intactId="EBI-10754950">
        <id>Q9HBT8</id>
    </interactant>
    <interactant intactId="EBI-466029">
        <id>P42858</id>
        <label>HTT</label>
    </interactant>
    <organismsDiffer>false</organismsDiffer>
    <experiments>9</experiments>
</comment>
<comment type="interaction">
    <interactant intactId="EBI-10754950">
        <id>Q9HBT8</id>
    </interactant>
    <interactant intactId="EBI-10172052">
        <id>P60411</id>
        <label>KRTAP10-9</label>
    </interactant>
    <organismsDiffer>false</organismsDiffer>
    <experiments>3</experiments>
</comment>
<comment type="interaction">
    <interactant intactId="EBI-10754950">
        <id>Q9HBT8</id>
    </interactant>
    <interactant intactId="EBI-79165">
        <id>Q9NRD5</id>
        <label>PICK1</label>
    </interactant>
    <organismsDiffer>false</organismsDiffer>
    <experiments>3</experiments>
</comment>
<comment type="interaction">
    <interactant intactId="EBI-10754950">
        <id>Q9HBT8</id>
    </interactant>
    <interactant intactId="EBI-395959">
        <id>Q15287</id>
        <label>RNPS1</label>
    </interactant>
    <organismsDiffer>false</organismsDiffer>
    <experiments>3</experiments>
</comment>
<comment type="interaction">
    <interactant intactId="EBI-10754950">
        <id>Q9HBT8</id>
    </interactant>
    <interactant intactId="EBI-5235340">
        <id>Q7Z699</id>
        <label>SPRED1</label>
    </interactant>
    <organismsDiffer>false</organismsDiffer>
    <experiments>3</experiments>
</comment>
<comment type="interaction">
    <interactant intactId="EBI-10754950">
        <id>Q9HBT8</id>
    </interactant>
    <interactant intactId="EBI-3867173">
        <id>A7MD48</id>
        <label>SRRM4</label>
    </interactant>
    <organismsDiffer>false</organismsDiffer>
    <experiments>3</experiments>
</comment>
<comment type="interaction">
    <interactant intactId="EBI-10754950">
        <id>Q9HBT8</id>
    </interactant>
    <interactant intactId="EBI-725997">
        <id>Q8WV44</id>
        <label>TRIM41</label>
    </interactant>
    <organismsDiffer>false</organismsDiffer>
    <experiments>3</experiments>
</comment>
<comment type="interaction">
    <interactant intactId="EBI-10754950">
        <id>Q9HBT8</id>
    </interactant>
    <interactant intactId="EBI-947459">
        <id>Q9H2G4</id>
        <label>TSPYL2</label>
    </interactant>
    <organismsDiffer>false</organismsDiffer>
    <experiments>3</experiments>
</comment>
<comment type="interaction">
    <interactant intactId="EBI-10754950">
        <id>Q9HBT8</id>
    </interactant>
    <interactant intactId="EBI-6427977">
        <id>Q96SQ5</id>
        <label>ZNF587</label>
    </interactant>
    <organismsDiffer>false</organismsDiffer>
    <experiments>3</experiments>
</comment>
<comment type="interaction">
    <interactant intactId="EBI-10754950">
        <id>Q9HBT8</id>
    </interactant>
    <interactant intactId="EBI-10240849">
        <id>Q3KQV3</id>
        <label>ZNF792</label>
    </interactant>
    <organismsDiffer>false</organismsDiffer>
    <experiments>3</experiments>
</comment>
<comment type="interaction">
    <interactant intactId="EBI-10310244">
        <id>Q9HBT8-2</id>
    </interactant>
    <interactant intactId="EBI-10171697">
        <id>Q6A162</id>
        <label>KRT40</label>
    </interactant>
    <organismsDiffer>false</organismsDiffer>
    <experiments>3</experiments>
</comment>
<comment type="interaction">
    <interactant intactId="EBI-10310244">
        <id>Q9HBT8-2</id>
    </interactant>
    <interactant intactId="EBI-10172150">
        <id>P60370</id>
        <label>KRTAP10-5</label>
    </interactant>
    <organismsDiffer>false</organismsDiffer>
    <experiments>3</experiments>
</comment>
<comment type="subcellular location">
    <subcellularLocation>
        <location evidence="6">Nucleus</location>
    </subcellularLocation>
</comment>
<comment type="alternative products">
    <event type="alternative splicing"/>
    <isoform>
        <id>Q9HBT8-1</id>
        <name>1</name>
        <sequence type="displayed"/>
    </isoform>
    <isoform>
        <id>Q9HBT8-2</id>
        <name>2</name>
        <sequence type="described" ref="VSP_056673"/>
    </isoform>
</comment>
<comment type="similarity">
    <text evidence="6">Belongs to the krueppel C2H2-type zinc-finger protein family.</text>
</comment>
<comment type="sequence caution" evidence="6">
    <conflict type="erroneous initiation">
        <sequence resource="EMBL-CDS" id="BAB47503"/>
    </conflict>
</comment>
<proteinExistence type="evidence at protein level"/>
<name>Z286A_HUMAN</name>
<organism>
    <name type="scientific">Homo sapiens</name>
    <name type="common">Human</name>
    <dbReference type="NCBI Taxonomy" id="9606"/>
    <lineage>
        <taxon>Eukaryota</taxon>
        <taxon>Metazoa</taxon>
        <taxon>Chordata</taxon>
        <taxon>Craniata</taxon>
        <taxon>Vertebrata</taxon>
        <taxon>Euteleostomi</taxon>
        <taxon>Mammalia</taxon>
        <taxon>Eutheria</taxon>
        <taxon>Euarchontoglires</taxon>
        <taxon>Primates</taxon>
        <taxon>Haplorrhini</taxon>
        <taxon>Catarrhini</taxon>
        <taxon>Hominidae</taxon>
        <taxon>Homo</taxon>
    </lineage>
</organism>
<keyword id="KW-0025">Alternative splicing</keyword>
<keyword id="KW-0238">DNA-binding</keyword>
<keyword id="KW-0479">Metal-binding</keyword>
<keyword id="KW-0539">Nucleus</keyword>
<keyword id="KW-0597">Phosphoprotein</keyword>
<keyword id="KW-1267">Proteomics identification</keyword>
<keyword id="KW-1185">Reference proteome</keyword>
<keyword id="KW-0677">Repeat</keyword>
<keyword id="KW-0804">Transcription</keyword>
<keyword id="KW-0805">Transcription regulation</keyword>
<keyword id="KW-0862">Zinc</keyword>
<keyword id="KW-0863">Zinc-finger</keyword>
<feature type="chain" id="PRO_0000047510" description="Zinc finger protein 286A">
    <location>
        <begin position="1"/>
        <end position="521"/>
    </location>
</feature>
<feature type="domain" description="KRAB" evidence="2">
    <location>
        <begin position="45"/>
        <end position="111"/>
    </location>
</feature>
<feature type="zinc finger region" description="C2H2-type 1" evidence="1">
    <location>
        <begin position="243"/>
        <end position="265"/>
    </location>
</feature>
<feature type="zinc finger region" description="C2H2-type 2" evidence="1">
    <location>
        <begin position="271"/>
        <end position="293"/>
    </location>
</feature>
<feature type="zinc finger region" description="C2H2-type 3" evidence="1">
    <location>
        <begin position="298"/>
        <end position="320"/>
    </location>
</feature>
<feature type="zinc finger region" description="C2H2-type 4" evidence="1">
    <location>
        <begin position="326"/>
        <end position="348"/>
    </location>
</feature>
<feature type="zinc finger region" description="C2H2-type 5" evidence="1">
    <location>
        <begin position="354"/>
        <end position="376"/>
    </location>
</feature>
<feature type="zinc finger region" description="C2H2-type 6" evidence="1">
    <location>
        <begin position="382"/>
        <end position="404"/>
    </location>
</feature>
<feature type="zinc finger region" description="C2H2-type 7" evidence="1">
    <location>
        <begin position="410"/>
        <end position="432"/>
    </location>
</feature>
<feature type="zinc finger region" description="C2H2-type 8" evidence="1">
    <location>
        <begin position="438"/>
        <end position="460"/>
    </location>
</feature>
<feature type="zinc finger region" description="C2H2-type 9" evidence="1">
    <location>
        <begin position="466"/>
        <end position="488"/>
    </location>
</feature>
<feature type="zinc finger region" description="C2H2-type 10" evidence="1">
    <location>
        <begin position="494"/>
        <end position="516"/>
    </location>
</feature>
<feature type="region of interest" description="Disordered" evidence="3">
    <location>
        <begin position="1"/>
        <end position="31"/>
    </location>
</feature>
<feature type="region of interest" description="Disordered" evidence="3">
    <location>
        <begin position="91"/>
        <end position="126"/>
    </location>
</feature>
<feature type="compositionally biased region" description="Basic and acidic residues" evidence="3">
    <location>
        <begin position="94"/>
        <end position="105"/>
    </location>
</feature>
<feature type="modified residue" description="Phosphoserine" evidence="7">
    <location>
        <position position="19"/>
    </location>
</feature>
<feature type="splice variant" id="VSP_056673" description="In isoform 2." evidence="5">
    <original>METDLAEMPEK</original>
    <variation>M</variation>
    <location>
        <begin position="1"/>
        <end position="11"/>
    </location>
</feature>
<feature type="sequence variant" id="VAR_021892" description="In dbSNP:rs3760299." evidence="4">
    <original>Y</original>
    <variation>H</variation>
    <location>
        <position position="90"/>
    </location>
</feature>
<sequence length="521" mass="60175">METDLAEMPEKGALSSQDSPHFQEKSTEEGEVAALRLTARSQETVTFKDVAMDFTPEEWGKLDPAQRDVMLENYRNLVSLWLPVSKPESYNLENGKEPLKLERKAPKSSYSDMETRPQSKDSTSVQDFSKAESCKVAIIDRLTRNSVYDSNLEAALECENWLENQQGNQERHLREMFTHMNSLSEETDHKHDVYWKSFNQKSVLITEDRVPKGSYAFHTLEKSLKQKSNLMKKQRTYKEKKPHKCNDCGELFTYHSVLIRHQRVHTGEKPYTCNECGKSFSHRANLTKHQRTHTRILFECSECKKTFTESSSLATHQRIHVGERPYECNECGKGFNRSTHLVQHQLIHTGVKPYECNECDKAFIHSSALIKHQRTHTGEKPYKCQECGKAFSHCSSLTKHQRVHTGEKPYECSECGKTFSQSTHLVQHQRIHTGEKPYECNECGKTFSRSSNFAKHQRIHIGKKPYKCSECGKAFIHSSALIQHQRTHTGEKPFRCNECGKSFKCSSSLIRHQRVHTEEQP</sequence>
<dbReference type="EMBL" id="AF217226">
    <property type="protein sequence ID" value="AAG09701.1"/>
    <property type="molecule type" value="mRNA"/>
</dbReference>
<dbReference type="EMBL" id="AB058777">
    <property type="protein sequence ID" value="BAB47503.2"/>
    <property type="status" value="ALT_INIT"/>
    <property type="molecule type" value="mRNA"/>
</dbReference>
<dbReference type="EMBL" id="AK296547">
    <property type="protein sequence ID" value="BAG59171.1"/>
    <property type="molecule type" value="mRNA"/>
</dbReference>
<dbReference type="EMBL" id="AC005324">
    <property type="status" value="NOT_ANNOTATED_CDS"/>
    <property type="molecule type" value="Genomic_DNA"/>
</dbReference>
<dbReference type="CCDS" id="CCDS11172.1">
    <molecule id="Q9HBT8-1"/>
</dbReference>
<dbReference type="CCDS" id="CCDS73997.1">
    <molecule id="Q9HBT8-2"/>
</dbReference>
<dbReference type="RefSeq" id="NP_001124314.1">
    <molecule id="Q9HBT8-1"/>
    <property type="nucleotide sequence ID" value="NM_001130842.2"/>
</dbReference>
<dbReference type="RefSeq" id="NP_001275571.1">
    <property type="nucleotide sequence ID" value="NM_001288642.1"/>
</dbReference>
<dbReference type="RefSeq" id="NP_001275572.1">
    <molecule id="Q9HBT8-2"/>
    <property type="nucleotide sequence ID" value="NM_001288643.2"/>
</dbReference>
<dbReference type="RefSeq" id="NP_001275573.1">
    <property type="nucleotide sequence ID" value="NM_001288644.1"/>
</dbReference>
<dbReference type="RefSeq" id="NP_001275574.1">
    <property type="nucleotide sequence ID" value="NM_001288645.1"/>
</dbReference>
<dbReference type="RefSeq" id="NP_001275575.1">
    <property type="nucleotide sequence ID" value="NM_001288646.1"/>
</dbReference>
<dbReference type="RefSeq" id="NP_001275576.1">
    <property type="nucleotide sequence ID" value="NM_001288647.1"/>
</dbReference>
<dbReference type="RefSeq" id="NP_001275577.1">
    <property type="nucleotide sequence ID" value="NM_001288648.1"/>
</dbReference>
<dbReference type="RefSeq" id="NP_001275578.1">
    <property type="nucleotide sequence ID" value="NM_001288649.1"/>
</dbReference>
<dbReference type="RefSeq" id="NP_065703.1">
    <molecule id="Q9HBT8-1"/>
    <property type="nucleotide sequence ID" value="NM_020652.3"/>
</dbReference>
<dbReference type="SMR" id="Q9HBT8"/>
<dbReference type="BioGRID" id="121489">
    <property type="interactions" value="36"/>
</dbReference>
<dbReference type="FunCoup" id="Q9HBT8">
    <property type="interactions" value="305"/>
</dbReference>
<dbReference type="IntAct" id="Q9HBT8">
    <property type="interactions" value="31"/>
</dbReference>
<dbReference type="STRING" id="9606.ENSP00000464218"/>
<dbReference type="GlyGen" id="Q9HBT8">
    <property type="glycosylation" value="1 site, 1 O-linked glycan (1 site)"/>
</dbReference>
<dbReference type="iPTMnet" id="Q9HBT8"/>
<dbReference type="PhosphoSitePlus" id="Q9HBT8"/>
<dbReference type="BioMuta" id="ZNF286A"/>
<dbReference type="DMDM" id="20141039"/>
<dbReference type="jPOST" id="Q9HBT8"/>
<dbReference type="MassIVE" id="Q9HBT8"/>
<dbReference type="PaxDb" id="9606-ENSP00000464218"/>
<dbReference type="PeptideAtlas" id="Q9HBT8"/>
<dbReference type="ProteomicsDB" id="81592">
    <molecule id="Q9HBT8-1"/>
</dbReference>
<dbReference type="Pumba" id="Q9HBT8"/>
<dbReference type="Antibodypedia" id="13162">
    <property type="antibodies" value="243 antibodies from 18 providers"/>
</dbReference>
<dbReference type="DNASU" id="57335"/>
<dbReference type="Ensembl" id="ENST00000421016.5">
    <molecule id="Q9HBT8-1"/>
    <property type="protein sequence ID" value="ENSP00000397163.1"/>
    <property type="gene ID" value="ENSG00000187607.16"/>
</dbReference>
<dbReference type="Ensembl" id="ENST00000464847.6">
    <molecule id="Q9HBT8-1"/>
    <property type="protein sequence ID" value="ENSP00000464218.1"/>
    <property type="gene ID" value="ENSG00000187607.16"/>
</dbReference>
<dbReference type="Ensembl" id="ENST00000583566.6">
    <molecule id="Q9HBT8-1"/>
    <property type="protein sequence ID" value="ENSP00000464063.1"/>
    <property type="gene ID" value="ENSG00000187607.16"/>
</dbReference>
<dbReference type="Ensembl" id="ENST00000593105.5">
    <molecule id="Q9HBT8-2"/>
    <property type="protein sequence ID" value="ENSP00000466154.1"/>
    <property type="gene ID" value="ENSG00000187607.16"/>
</dbReference>
<dbReference type="GeneID" id="57335"/>
<dbReference type="KEGG" id="hsa:57335"/>
<dbReference type="MANE-Select" id="ENST00000583566.6">
    <property type="protein sequence ID" value="ENSP00000464063.1"/>
    <property type="RefSeq nucleotide sequence ID" value="NM_001130842.2"/>
    <property type="RefSeq protein sequence ID" value="NP_001124314.1"/>
</dbReference>
<dbReference type="UCSC" id="uc002gpa.4">
    <molecule id="Q9HBT8-1"/>
    <property type="organism name" value="human"/>
</dbReference>
<dbReference type="AGR" id="HGNC:13501"/>
<dbReference type="CTD" id="57335"/>
<dbReference type="GeneCards" id="ZNF286A"/>
<dbReference type="HGNC" id="HGNC:13501">
    <property type="gene designation" value="ZNF286A"/>
</dbReference>
<dbReference type="HPA" id="ENSG00000187607">
    <property type="expression patterns" value="Low tissue specificity"/>
</dbReference>
<dbReference type="neXtProt" id="NX_Q9HBT8"/>
<dbReference type="OpenTargets" id="ENSG00000187607"/>
<dbReference type="PharmGKB" id="PA162410066"/>
<dbReference type="VEuPathDB" id="HostDB:ENSG00000187607"/>
<dbReference type="eggNOG" id="KOG1721">
    <property type="taxonomic scope" value="Eukaryota"/>
</dbReference>
<dbReference type="GeneTree" id="ENSGT00940000161686"/>
<dbReference type="HOGENOM" id="CLU_002678_44_3_1"/>
<dbReference type="InParanoid" id="Q9HBT8"/>
<dbReference type="OMA" id="METRPES"/>
<dbReference type="OrthoDB" id="8117402at2759"/>
<dbReference type="PAN-GO" id="Q9HBT8">
    <property type="GO annotations" value="4 GO annotations based on evolutionary models"/>
</dbReference>
<dbReference type="PhylomeDB" id="Q9HBT8"/>
<dbReference type="PathwayCommons" id="Q9HBT8"/>
<dbReference type="Reactome" id="R-HSA-212436">
    <property type="pathway name" value="Generic Transcription Pathway"/>
</dbReference>
<dbReference type="SignaLink" id="Q9HBT8"/>
<dbReference type="BioGRID-ORCS" id="57335">
    <property type="hits" value="10 hits in 1168 CRISPR screens"/>
</dbReference>
<dbReference type="ChiTaRS" id="ZNF286A">
    <property type="organism name" value="human"/>
</dbReference>
<dbReference type="GenomeRNAi" id="57335"/>
<dbReference type="Pharos" id="Q9HBT8">
    <property type="development level" value="Tdark"/>
</dbReference>
<dbReference type="PRO" id="PR:Q9HBT8"/>
<dbReference type="Proteomes" id="UP000005640">
    <property type="component" value="Chromosome 17"/>
</dbReference>
<dbReference type="RNAct" id="Q9HBT8">
    <property type="molecule type" value="protein"/>
</dbReference>
<dbReference type="Bgee" id="ENSG00000187607">
    <property type="expression patterns" value="Expressed in ganglionic eminence and 136 other cell types or tissues"/>
</dbReference>
<dbReference type="ExpressionAtlas" id="Q9HBT8">
    <property type="expression patterns" value="baseline and differential"/>
</dbReference>
<dbReference type="GO" id="GO:0005634">
    <property type="term" value="C:nucleus"/>
    <property type="evidence" value="ECO:0000318"/>
    <property type="project" value="GO_Central"/>
</dbReference>
<dbReference type="GO" id="GO:0000981">
    <property type="term" value="F:DNA-binding transcription factor activity, RNA polymerase II-specific"/>
    <property type="evidence" value="ECO:0000318"/>
    <property type="project" value="GO_Central"/>
</dbReference>
<dbReference type="GO" id="GO:0000978">
    <property type="term" value="F:RNA polymerase II cis-regulatory region sequence-specific DNA binding"/>
    <property type="evidence" value="ECO:0000318"/>
    <property type="project" value="GO_Central"/>
</dbReference>
<dbReference type="GO" id="GO:0008270">
    <property type="term" value="F:zinc ion binding"/>
    <property type="evidence" value="ECO:0007669"/>
    <property type="project" value="UniProtKB-KW"/>
</dbReference>
<dbReference type="GO" id="GO:0006357">
    <property type="term" value="P:regulation of transcription by RNA polymerase II"/>
    <property type="evidence" value="ECO:0000318"/>
    <property type="project" value="GO_Central"/>
</dbReference>
<dbReference type="CDD" id="cd07765">
    <property type="entry name" value="KRAB_A-box"/>
    <property type="match status" value="1"/>
</dbReference>
<dbReference type="FunFam" id="3.30.160.60:FF:000478">
    <property type="entry name" value="Zinc finger protein 133"/>
    <property type="match status" value="1"/>
</dbReference>
<dbReference type="FunFam" id="3.30.160.60:FF:000424">
    <property type="entry name" value="Zinc finger protein 140"/>
    <property type="match status" value="1"/>
</dbReference>
<dbReference type="FunFam" id="3.30.160.60:FF:001089">
    <property type="entry name" value="zinc finger protein 140 isoform X2"/>
    <property type="match status" value="1"/>
</dbReference>
<dbReference type="FunFam" id="3.30.160.60:FF:001337">
    <property type="entry name" value="Zinc finger protein 286A"/>
    <property type="match status" value="1"/>
</dbReference>
<dbReference type="FunFam" id="3.30.160.60:FF:001434">
    <property type="entry name" value="zinc finger protein 286A isoform X1"/>
    <property type="match status" value="1"/>
</dbReference>
<dbReference type="FunFam" id="3.30.160.60:FF:000352">
    <property type="entry name" value="zinc finger protein 3 homolog"/>
    <property type="match status" value="1"/>
</dbReference>
<dbReference type="FunFam" id="3.30.160.60:FF:002343">
    <property type="entry name" value="Zinc finger protein 33A"/>
    <property type="match status" value="1"/>
</dbReference>
<dbReference type="FunFam" id="3.30.160.60:FF:002090">
    <property type="entry name" value="Zinc finger protein 473"/>
    <property type="match status" value="1"/>
</dbReference>
<dbReference type="FunFam" id="3.30.160.60:FF:000737">
    <property type="entry name" value="Zinc finger protein 565"/>
    <property type="match status" value="2"/>
</dbReference>
<dbReference type="Gene3D" id="6.10.140.140">
    <property type="match status" value="1"/>
</dbReference>
<dbReference type="Gene3D" id="3.30.160.60">
    <property type="entry name" value="Classic Zinc Finger"/>
    <property type="match status" value="10"/>
</dbReference>
<dbReference type="InterPro" id="IPR001909">
    <property type="entry name" value="KRAB"/>
</dbReference>
<dbReference type="InterPro" id="IPR036051">
    <property type="entry name" value="KRAB_dom_sf"/>
</dbReference>
<dbReference type="InterPro" id="IPR036236">
    <property type="entry name" value="Znf_C2H2_sf"/>
</dbReference>
<dbReference type="InterPro" id="IPR013087">
    <property type="entry name" value="Znf_C2H2_type"/>
</dbReference>
<dbReference type="PANTHER" id="PTHR23235">
    <property type="entry name" value="KRUEPPEL-LIKE TRANSCRIPTION FACTOR"/>
    <property type="match status" value="1"/>
</dbReference>
<dbReference type="PANTHER" id="PTHR23235:SF142">
    <property type="entry name" value="ZINC FINGER PROTEIN 384"/>
    <property type="match status" value="1"/>
</dbReference>
<dbReference type="Pfam" id="PF01352">
    <property type="entry name" value="KRAB"/>
    <property type="match status" value="1"/>
</dbReference>
<dbReference type="Pfam" id="PF00096">
    <property type="entry name" value="zf-C2H2"/>
    <property type="match status" value="10"/>
</dbReference>
<dbReference type="SMART" id="SM00349">
    <property type="entry name" value="KRAB"/>
    <property type="match status" value="1"/>
</dbReference>
<dbReference type="SMART" id="SM00355">
    <property type="entry name" value="ZnF_C2H2"/>
    <property type="match status" value="10"/>
</dbReference>
<dbReference type="SUPFAM" id="SSF57667">
    <property type="entry name" value="beta-beta-alpha zinc fingers"/>
    <property type="match status" value="6"/>
</dbReference>
<dbReference type="SUPFAM" id="SSF109640">
    <property type="entry name" value="KRAB domain (Kruppel-associated box)"/>
    <property type="match status" value="1"/>
</dbReference>
<dbReference type="PROSITE" id="PS50805">
    <property type="entry name" value="KRAB"/>
    <property type="match status" value="1"/>
</dbReference>
<dbReference type="PROSITE" id="PS00028">
    <property type="entry name" value="ZINC_FINGER_C2H2_1"/>
    <property type="match status" value="10"/>
</dbReference>
<dbReference type="PROSITE" id="PS50157">
    <property type="entry name" value="ZINC_FINGER_C2H2_2"/>
    <property type="match status" value="10"/>
</dbReference>
<accession>Q9HBT8</accession>
<accession>B4DKF9</accession>
<accession>Q96JF3</accession>
<reference key="1">
    <citation type="submission" date="1999-12" db="EMBL/GenBank/DDBJ databases">
        <title>Deletion of a novel zinc finger gene in Smith-Magenis syndrome.</title>
        <authorList>
            <person name="Romero-Pastrana F."/>
            <person name="Srivastava A.K."/>
        </authorList>
    </citation>
    <scope>NUCLEOTIDE SEQUENCE [MRNA] (ISOFORM 1)</scope>
</reference>
<reference key="2">
    <citation type="journal article" date="2001" name="DNA Res.">
        <title>Prediction of the coding sequences of unidentified human genes. XX. The complete sequences of 100 new cDNA clones from brain which code for large proteins in vitro.</title>
        <authorList>
            <person name="Nagase T."/>
            <person name="Nakayama M."/>
            <person name="Nakajima D."/>
            <person name="Kikuno R."/>
            <person name="Ohara O."/>
        </authorList>
    </citation>
    <scope>NUCLEOTIDE SEQUENCE [LARGE SCALE MRNA] (ISOFORM 1)</scope>
    <scope>VARIANT HIS-90</scope>
    <source>
        <tissue>Brain</tissue>
    </source>
</reference>
<reference key="3">
    <citation type="journal article" date="2004" name="Nat. Genet.">
        <title>Complete sequencing and characterization of 21,243 full-length human cDNAs.</title>
        <authorList>
            <person name="Ota T."/>
            <person name="Suzuki Y."/>
            <person name="Nishikawa T."/>
            <person name="Otsuki T."/>
            <person name="Sugiyama T."/>
            <person name="Irie R."/>
            <person name="Wakamatsu A."/>
            <person name="Hayashi K."/>
            <person name="Sato H."/>
            <person name="Nagai K."/>
            <person name="Kimura K."/>
            <person name="Makita H."/>
            <person name="Sekine M."/>
            <person name="Obayashi M."/>
            <person name="Nishi T."/>
            <person name="Shibahara T."/>
            <person name="Tanaka T."/>
            <person name="Ishii S."/>
            <person name="Yamamoto J."/>
            <person name="Saito K."/>
            <person name="Kawai Y."/>
            <person name="Isono Y."/>
            <person name="Nakamura Y."/>
            <person name="Nagahari K."/>
            <person name="Murakami K."/>
            <person name="Yasuda T."/>
            <person name="Iwayanagi T."/>
            <person name="Wagatsuma M."/>
            <person name="Shiratori A."/>
            <person name="Sudo H."/>
            <person name="Hosoiri T."/>
            <person name="Kaku Y."/>
            <person name="Kodaira H."/>
            <person name="Kondo H."/>
            <person name="Sugawara M."/>
            <person name="Takahashi M."/>
            <person name="Kanda K."/>
            <person name="Yokoi T."/>
            <person name="Furuya T."/>
            <person name="Kikkawa E."/>
            <person name="Omura Y."/>
            <person name="Abe K."/>
            <person name="Kamihara K."/>
            <person name="Katsuta N."/>
            <person name="Sato K."/>
            <person name="Tanikawa M."/>
            <person name="Yamazaki M."/>
            <person name="Ninomiya K."/>
            <person name="Ishibashi T."/>
            <person name="Yamashita H."/>
            <person name="Murakawa K."/>
            <person name="Fujimori K."/>
            <person name="Tanai H."/>
            <person name="Kimata M."/>
            <person name="Watanabe M."/>
            <person name="Hiraoka S."/>
            <person name="Chiba Y."/>
            <person name="Ishida S."/>
            <person name="Ono Y."/>
            <person name="Takiguchi S."/>
            <person name="Watanabe S."/>
            <person name="Yosida M."/>
            <person name="Hotuta T."/>
            <person name="Kusano J."/>
            <person name="Kanehori K."/>
            <person name="Takahashi-Fujii A."/>
            <person name="Hara H."/>
            <person name="Tanase T.-O."/>
            <person name="Nomura Y."/>
            <person name="Togiya S."/>
            <person name="Komai F."/>
            <person name="Hara R."/>
            <person name="Takeuchi K."/>
            <person name="Arita M."/>
            <person name="Imose N."/>
            <person name="Musashino K."/>
            <person name="Yuuki H."/>
            <person name="Oshima A."/>
            <person name="Sasaki N."/>
            <person name="Aotsuka S."/>
            <person name="Yoshikawa Y."/>
            <person name="Matsunawa H."/>
            <person name="Ichihara T."/>
            <person name="Shiohata N."/>
            <person name="Sano S."/>
            <person name="Moriya S."/>
            <person name="Momiyama H."/>
            <person name="Satoh N."/>
            <person name="Takami S."/>
            <person name="Terashima Y."/>
            <person name="Suzuki O."/>
            <person name="Nakagawa S."/>
            <person name="Senoh A."/>
            <person name="Mizoguchi H."/>
            <person name="Goto Y."/>
            <person name="Shimizu F."/>
            <person name="Wakebe H."/>
            <person name="Hishigaki H."/>
            <person name="Watanabe T."/>
            <person name="Sugiyama A."/>
            <person name="Takemoto M."/>
            <person name="Kawakami B."/>
            <person name="Yamazaki M."/>
            <person name="Watanabe K."/>
            <person name="Kumagai A."/>
            <person name="Itakura S."/>
            <person name="Fukuzumi Y."/>
            <person name="Fujimori Y."/>
            <person name="Komiyama M."/>
            <person name="Tashiro H."/>
            <person name="Tanigami A."/>
            <person name="Fujiwara T."/>
            <person name="Ono T."/>
            <person name="Yamada K."/>
            <person name="Fujii Y."/>
            <person name="Ozaki K."/>
            <person name="Hirao M."/>
            <person name="Ohmori Y."/>
            <person name="Kawabata A."/>
            <person name="Hikiji T."/>
            <person name="Kobatake N."/>
            <person name="Inagaki H."/>
            <person name="Ikema Y."/>
            <person name="Okamoto S."/>
            <person name="Okitani R."/>
            <person name="Kawakami T."/>
            <person name="Noguchi S."/>
            <person name="Itoh T."/>
            <person name="Shigeta K."/>
            <person name="Senba T."/>
            <person name="Matsumura K."/>
            <person name="Nakajima Y."/>
            <person name="Mizuno T."/>
            <person name="Morinaga M."/>
            <person name="Sasaki M."/>
            <person name="Togashi T."/>
            <person name="Oyama M."/>
            <person name="Hata H."/>
            <person name="Watanabe M."/>
            <person name="Komatsu T."/>
            <person name="Mizushima-Sugano J."/>
            <person name="Satoh T."/>
            <person name="Shirai Y."/>
            <person name="Takahashi Y."/>
            <person name="Nakagawa K."/>
            <person name="Okumura K."/>
            <person name="Nagase T."/>
            <person name="Nomura N."/>
            <person name="Kikuchi H."/>
            <person name="Masuho Y."/>
            <person name="Yamashita R."/>
            <person name="Nakai K."/>
            <person name="Yada T."/>
            <person name="Nakamura Y."/>
            <person name="Ohara O."/>
            <person name="Isogai T."/>
            <person name="Sugano S."/>
        </authorList>
    </citation>
    <scope>NUCLEOTIDE SEQUENCE [LARGE SCALE MRNA] (ISOFORM 2)</scope>
    <source>
        <tissue>Thalamus</tissue>
    </source>
</reference>
<reference key="4">
    <citation type="journal article" date="2006" name="Nature">
        <title>DNA sequence of human chromosome 17 and analysis of rearrangement in the human lineage.</title>
        <authorList>
            <person name="Zody M.C."/>
            <person name="Garber M."/>
            <person name="Adams D.J."/>
            <person name="Sharpe T."/>
            <person name="Harrow J."/>
            <person name="Lupski J.R."/>
            <person name="Nicholson C."/>
            <person name="Searle S.M."/>
            <person name="Wilming L."/>
            <person name="Young S.K."/>
            <person name="Abouelleil A."/>
            <person name="Allen N.R."/>
            <person name="Bi W."/>
            <person name="Bloom T."/>
            <person name="Borowsky M.L."/>
            <person name="Bugalter B.E."/>
            <person name="Butler J."/>
            <person name="Chang J.L."/>
            <person name="Chen C.-K."/>
            <person name="Cook A."/>
            <person name="Corum B."/>
            <person name="Cuomo C.A."/>
            <person name="de Jong P.J."/>
            <person name="DeCaprio D."/>
            <person name="Dewar K."/>
            <person name="FitzGerald M."/>
            <person name="Gilbert J."/>
            <person name="Gibson R."/>
            <person name="Gnerre S."/>
            <person name="Goldstein S."/>
            <person name="Grafham D.V."/>
            <person name="Grocock R."/>
            <person name="Hafez N."/>
            <person name="Hagopian D.S."/>
            <person name="Hart E."/>
            <person name="Norman C.H."/>
            <person name="Humphray S."/>
            <person name="Jaffe D.B."/>
            <person name="Jones M."/>
            <person name="Kamal M."/>
            <person name="Khodiyar V.K."/>
            <person name="LaButti K."/>
            <person name="Laird G."/>
            <person name="Lehoczky J."/>
            <person name="Liu X."/>
            <person name="Lokyitsang T."/>
            <person name="Loveland J."/>
            <person name="Lui A."/>
            <person name="Macdonald P."/>
            <person name="Major J.E."/>
            <person name="Matthews L."/>
            <person name="Mauceli E."/>
            <person name="McCarroll S.A."/>
            <person name="Mihalev A.H."/>
            <person name="Mudge J."/>
            <person name="Nguyen C."/>
            <person name="Nicol R."/>
            <person name="O'Leary S.B."/>
            <person name="Osoegawa K."/>
            <person name="Schwartz D.C."/>
            <person name="Shaw-Smith C."/>
            <person name="Stankiewicz P."/>
            <person name="Steward C."/>
            <person name="Swarbreck D."/>
            <person name="Venkataraman V."/>
            <person name="Whittaker C.A."/>
            <person name="Yang X."/>
            <person name="Zimmer A.R."/>
            <person name="Bradley A."/>
            <person name="Hubbard T."/>
            <person name="Birren B.W."/>
            <person name="Rogers J."/>
            <person name="Lander E.S."/>
            <person name="Nusbaum C."/>
        </authorList>
    </citation>
    <scope>NUCLEOTIDE SEQUENCE [LARGE SCALE GENOMIC DNA]</scope>
</reference>
<reference key="5">
    <citation type="journal article" date="2002" name="DNA Res.">
        <title>Construction of expression-ready cDNA clones for KIAA genes: manual curation of 330 KIAA cDNA clones.</title>
        <authorList>
            <person name="Nakajima D."/>
            <person name="Okazaki N."/>
            <person name="Yamakawa H."/>
            <person name="Kikuno R."/>
            <person name="Ohara O."/>
            <person name="Nagase T."/>
        </authorList>
    </citation>
    <scope>SEQUENCE REVISION TO N-TERMINUS</scope>
</reference>
<reference key="6">
    <citation type="journal article" date="2013" name="J. Proteome Res.">
        <title>Toward a comprehensive characterization of a human cancer cell phosphoproteome.</title>
        <authorList>
            <person name="Zhou H."/>
            <person name="Di Palma S."/>
            <person name="Preisinger C."/>
            <person name="Peng M."/>
            <person name="Polat A.N."/>
            <person name="Heck A.J."/>
            <person name="Mohammed S."/>
        </authorList>
    </citation>
    <scope>PHOSPHORYLATION [LARGE SCALE ANALYSIS] AT SER-19</scope>
    <scope>IDENTIFICATION BY MASS SPECTROMETRY [LARGE SCALE ANALYSIS]</scope>
    <source>
        <tissue>Erythroleukemia</tissue>
    </source>
</reference>